<dbReference type="EC" id="3.6.5.-" evidence="1"/>
<dbReference type="EMBL" id="CP000688">
    <property type="protein sequence ID" value="ABQ16594.1"/>
    <property type="molecule type" value="Genomic_DNA"/>
</dbReference>
<dbReference type="SMR" id="A5FP49"/>
<dbReference type="KEGG" id="deb:DehaBAV1_0002"/>
<dbReference type="PATRIC" id="fig|216389.18.peg.2"/>
<dbReference type="HOGENOM" id="CLU_011747_2_1_0"/>
<dbReference type="GO" id="GO:0005737">
    <property type="term" value="C:cytoplasm"/>
    <property type="evidence" value="ECO:0007669"/>
    <property type="project" value="UniProtKB-SubCell"/>
</dbReference>
<dbReference type="GO" id="GO:0005525">
    <property type="term" value="F:GTP binding"/>
    <property type="evidence" value="ECO:0007669"/>
    <property type="project" value="UniProtKB-UniRule"/>
</dbReference>
<dbReference type="GO" id="GO:0003924">
    <property type="term" value="F:GTPase activity"/>
    <property type="evidence" value="ECO:0007669"/>
    <property type="project" value="UniProtKB-UniRule"/>
</dbReference>
<dbReference type="GO" id="GO:0000287">
    <property type="term" value="F:magnesium ion binding"/>
    <property type="evidence" value="ECO:0007669"/>
    <property type="project" value="InterPro"/>
</dbReference>
<dbReference type="GO" id="GO:0042254">
    <property type="term" value="P:ribosome biogenesis"/>
    <property type="evidence" value="ECO:0007669"/>
    <property type="project" value="UniProtKB-UniRule"/>
</dbReference>
<dbReference type="CDD" id="cd01898">
    <property type="entry name" value="Obg"/>
    <property type="match status" value="1"/>
</dbReference>
<dbReference type="FunFam" id="2.70.210.12:FF:000001">
    <property type="entry name" value="GTPase Obg"/>
    <property type="match status" value="1"/>
</dbReference>
<dbReference type="Gene3D" id="3.30.300.350">
    <property type="entry name" value="GTP-binding protein OBG, C-terminal domain"/>
    <property type="match status" value="1"/>
</dbReference>
<dbReference type="Gene3D" id="2.70.210.12">
    <property type="entry name" value="GTP1/OBG domain"/>
    <property type="match status" value="1"/>
</dbReference>
<dbReference type="Gene3D" id="3.40.50.300">
    <property type="entry name" value="P-loop containing nucleotide triphosphate hydrolases"/>
    <property type="match status" value="1"/>
</dbReference>
<dbReference type="HAMAP" id="MF_01454">
    <property type="entry name" value="GTPase_Obg"/>
    <property type="match status" value="1"/>
</dbReference>
<dbReference type="InterPro" id="IPR031167">
    <property type="entry name" value="G_OBG"/>
</dbReference>
<dbReference type="InterPro" id="IPR006073">
    <property type="entry name" value="GTP-bd"/>
</dbReference>
<dbReference type="InterPro" id="IPR014100">
    <property type="entry name" value="GTP-bd_Obg/CgtA"/>
</dbReference>
<dbReference type="InterPro" id="IPR036346">
    <property type="entry name" value="GTP-bd_prot_GTP1/OBG_C_sf"/>
</dbReference>
<dbReference type="InterPro" id="IPR006169">
    <property type="entry name" value="GTP1_OBG_dom"/>
</dbReference>
<dbReference type="InterPro" id="IPR036726">
    <property type="entry name" value="GTP1_OBG_dom_sf"/>
</dbReference>
<dbReference type="InterPro" id="IPR045086">
    <property type="entry name" value="OBG_GTPase"/>
</dbReference>
<dbReference type="InterPro" id="IPR015349">
    <property type="entry name" value="OCT_dom"/>
</dbReference>
<dbReference type="InterPro" id="IPR027417">
    <property type="entry name" value="P-loop_NTPase"/>
</dbReference>
<dbReference type="NCBIfam" id="TIGR02729">
    <property type="entry name" value="Obg_CgtA"/>
    <property type="match status" value="1"/>
</dbReference>
<dbReference type="NCBIfam" id="TIGR03595">
    <property type="entry name" value="Obg_CgtA_exten"/>
    <property type="match status" value="1"/>
</dbReference>
<dbReference type="NCBIfam" id="NF008954">
    <property type="entry name" value="PRK12296.1"/>
    <property type="match status" value="1"/>
</dbReference>
<dbReference type="NCBIfam" id="NF008955">
    <property type="entry name" value="PRK12297.1"/>
    <property type="match status" value="1"/>
</dbReference>
<dbReference type="NCBIfam" id="NF008956">
    <property type="entry name" value="PRK12299.1"/>
    <property type="match status" value="1"/>
</dbReference>
<dbReference type="PANTHER" id="PTHR11702">
    <property type="entry name" value="DEVELOPMENTALLY REGULATED GTP-BINDING PROTEIN-RELATED"/>
    <property type="match status" value="1"/>
</dbReference>
<dbReference type="PANTHER" id="PTHR11702:SF31">
    <property type="entry name" value="MITOCHONDRIAL RIBOSOME-ASSOCIATED GTPASE 2"/>
    <property type="match status" value="1"/>
</dbReference>
<dbReference type="Pfam" id="PF09269">
    <property type="entry name" value="DUF1967"/>
    <property type="match status" value="1"/>
</dbReference>
<dbReference type="Pfam" id="PF01018">
    <property type="entry name" value="GTP1_OBG"/>
    <property type="match status" value="1"/>
</dbReference>
<dbReference type="Pfam" id="PF01926">
    <property type="entry name" value="MMR_HSR1"/>
    <property type="match status" value="1"/>
</dbReference>
<dbReference type="PRINTS" id="PR00326">
    <property type="entry name" value="GTP1OBG"/>
</dbReference>
<dbReference type="SUPFAM" id="SSF102741">
    <property type="entry name" value="Obg GTP-binding protein C-terminal domain"/>
    <property type="match status" value="1"/>
</dbReference>
<dbReference type="SUPFAM" id="SSF82051">
    <property type="entry name" value="Obg GTP-binding protein N-terminal domain"/>
    <property type="match status" value="1"/>
</dbReference>
<dbReference type="SUPFAM" id="SSF52540">
    <property type="entry name" value="P-loop containing nucleoside triphosphate hydrolases"/>
    <property type="match status" value="1"/>
</dbReference>
<dbReference type="PROSITE" id="PS51710">
    <property type="entry name" value="G_OBG"/>
    <property type="match status" value="1"/>
</dbReference>
<dbReference type="PROSITE" id="PS51883">
    <property type="entry name" value="OBG"/>
    <property type="match status" value="1"/>
</dbReference>
<dbReference type="PROSITE" id="PS51881">
    <property type="entry name" value="OCT"/>
    <property type="match status" value="1"/>
</dbReference>
<reference key="1">
    <citation type="submission" date="2007-05" db="EMBL/GenBank/DDBJ databases">
        <title>Complete sequence of Dehalococcoides sp. BAV1.</title>
        <authorList>
            <consortium name="US DOE Joint Genome Institute"/>
            <person name="Copeland A."/>
            <person name="Lucas S."/>
            <person name="Lapidus A."/>
            <person name="Barry K."/>
            <person name="Detter J.C."/>
            <person name="Glavina del Rio T."/>
            <person name="Hammon N."/>
            <person name="Israni S."/>
            <person name="Pitluck S."/>
            <person name="Lowry S."/>
            <person name="Clum A."/>
            <person name="Schmutz J."/>
            <person name="Larimer F."/>
            <person name="Land M."/>
            <person name="Hauser L."/>
            <person name="Kyrpides N."/>
            <person name="Kim E."/>
            <person name="Ritalahti K.M."/>
            <person name="Loeffler F."/>
            <person name="Richardson P."/>
        </authorList>
    </citation>
    <scope>NUCLEOTIDE SEQUENCE [LARGE SCALE GENOMIC DNA]</scope>
    <source>
        <strain>ATCC BAA-2100 / JCM 16839 / KCTC 5957 / BAV1</strain>
    </source>
</reference>
<gene>
    <name evidence="1" type="primary">obg</name>
    <name type="ordered locus">DehaBAV1_0002</name>
</gene>
<proteinExistence type="inferred from homology"/>
<name>OBG_DEHMB</name>
<organism>
    <name type="scientific">Dehalococcoides mccartyi (strain ATCC BAA-2100 / JCM 16839 / KCTC 5957 / BAV1)</name>
    <dbReference type="NCBI Taxonomy" id="216389"/>
    <lineage>
        <taxon>Bacteria</taxon>
        <taxon>Bacillati</taxon>
        <taxon>Chloroflexota</taxon>
        <taxon>Dehalococcoidia</taxon>
        <taxon>Dehalococcoidales</taxon>
        <taxon>Dehalococcoidaceae</taxon>
        <taxon>Dehalococcoides</taxon>
    </lineage>
</organism>
<feature type="chain" id="PRO_0000385876" description="GTPase Obg">
    <location>
        <begin position="1"/>
        <end position="424"/>
    </location>
</feature>
<feature type="domain" description="Obg" evidence="3">
    <location>
        <begin position="1"/>
        <end position="160"/>
    </location>
</feature>
<feature type="domain" description="OBG-type G" evidence="1">
    <location>
        <begin position="161"/>
        <end position="328"/>
    </location>
</feature>
<feature type="domain" description="OCT" evidence="2">
    <location>
        <begin position="349"/>
        <end position="424"/>
    </location>
</feature>
<feature type="binding site" evidence="1">
    <location>
        <begin position="167"/>
        <end position="174"/>
    </location>
    <ligand>
        <name>GTP</name>
        <dbReference type="ChEBI" id="CHEBI:37565"/>
    </ligand>
</feature>
<feature type="binding site" evidence="1">
    <location>
        <position position="174"/>
    </location>
    <ligand>
        <name>Mg(2+)</name>
        <dbReference type="ChEBI" id="CHEBI:18420"/>
    </ligand>
</feature>
<feature type="binding site" evidence="1">
    <location>
        <begin position="192"/>
        <end position="196"/>
    </location>
    <ligand>
        <name>GTP</name>
        <dbReference type="ChEBI" id="CHEBI:37565"/>
    </ligand>
</feature>
<feature type="binding site" evidence="1">
    <location>
        <position position="194"/>
    </location>
    <ligand>
        <name>Mg(2+)</name>
        <dbReference type="ChEBI" id="CHEBI:18420"/>
    </ligand>
</feature>
<feature type="binding site" evidence="1">
    <location>
        <begin position="213"/>
        <end position="216"/>
    </location>
    <ligand>
        <name>GTP</name>
        <dbReference type="ChEBI" id="CHEBI:37565"/>
    </ligand>
</feature>
<feature type="binding site" evidence="1">
    <location>
        <begin position="280"/>
        <end position="283"/>
    </location>
    <ligand>
        <name>GTP</name>
        <dbReference type="ChEBI" id="CHEBI:37565"/>
    </ligand>
</feature>
<feature type="binding site" evidence="1">
    <location>
        <begin position="309"/>
        <end position="311"/>
    </location>
    <ligand>
        <name>GTP</name>
        <dbReference type="ChEBI" id="CHEBI:37565"/>
    </ligand>
</feature>
<evidence type="ECO:0000255" key="1">
    <source>
        <dbReference type="HAMAP-Rule" id="MF_01454"/>
    </source>
</evidence>
<evidence type="ECO:0000255" key="2">
    <source>
        <dbReference type="PROSITE-ProRule" id="PRU01229"/>
    </source>
</evidence>
<evidence type="ECO:0000255" key="3">
    <source>
        <dbReference type="PROSITE-ProRule" id="PRU01231"/>
    </source>
</evidence>
<protein>
    <recommendedName>
        <fullName evidence="1">GTPase Obg</fullName>
        <ecNumber evidence="1">3.6.5.-</ecNumber>
    </recommendedName>
    <alternativeName>
        <fullName evidence="1">GTP-binding protein Obg</fullName>
    </alternativeName>
</protein>
<keyword id="KW-0963">Cytoplasm</keyword>
<keyword id="KW-0342">GTP-binding</keyword>
<keyword id="KW-0378">Hydrolase</keyword>
<keyword id="KW-0460">Magnesium</keyword>
<keyword id="KW-0479">Metal-binding</keyword>
<keyword id="KW-0547">Nucleotide-binding</keyword>
<accession>A5FP49</accession>
<comment type="function">
    <text evidence="1">An essential GTPase which binds GTP, GDP and possibly (p)ppGpp with moderate affinity, with high nucleotide exchange rates and a fairly low GTP hydrolysis rate. Plays a role in control of the cell cycle, stress response, ribosome biogenesis and in those bacteria that undergo differentiation, in morphogenesis control.</text>
</comment>
<comment type="cofactor">
    <cofactor evidence="1">
        <name>Mg(2+)</name>
        <dbReference type="ChEBI" id="CHEBI:18420"/>
    </cofactor>
</comment>
<comment type="subunit">
    <text evidence="1">Monomer.</text>
</comment>
<comment type="subcellular location">
    <subcellularLocation>
        <location evidence="1">Cytoplasm</location>
    </subcellularLocation>
</comment>
<comment type="similarity">
    <text evidence="1">Belongs to the TRAFAC class OBG-HflX-like GTPase superfamily. OBG GTPase family.</text>
</comment>
<sequence length="424" mass="46074">MFDRVEINIKAGDGGSGKVSFRREKFVPYGGPDGGDGGDGGNVYLEADSGLYSLLNFKHKRVHKASNGEGGMGSRCTGHNGADLVIKVPVGTVATILEENGQKRVLADLAADGDRTLVAHGGQGGLGNTHFVSSTNQAPMLAQKGQPGGEYDLILELKLIADVAIIGYPNVGKSSLLSLLTAAKPKVANYPFTTLSPVMGVIERPEGVFVMAEVPGLIENAHLGKGLGHDFLRHISRTRMVIHLLDGTSENPIDDMIKVNSELYLYDASLSERPQVVAINKIDDELVQLRREELKETFKEAGLEVFFISALTGEGVDVLLAKVAEKLDILKAADISETAPDHEVKIFRPAPKGKMGFRITRLEDGWQVEAPEIERIIEHSDIEDPEVRRQVMVLLKHRSVQQSLIKSGAVIGQKIITGRMEWYL</sequence>